<dbReference type="EC" id="2.7.7.8" evidence="1"/>
<dbReference type="EMBL" id="CP000153">
    <property type="protein sequence ID" value="ABB43709.1"/>
    <property type="molecule type" value="Genomic_DNA"/>
</dbReference>
<dbReference type="RefSeq" id="WP_011372063.1">
    <property type="nucleotide sequence ID" value="NC_007575.1"/>
</dbReference>
<dbReference type="SMR" id="Q30TH2"/>
<dbReference type="STRING" id="326298.Suden_0428"/>
<dbReference type="KEGG" id="tdn:Suden_0428"/>
<dbReference type="eggNOG" id="COG1185">
    <property type="taxonomic scope" value="Bacteria"/>
</dbReference>
<dbReference type="HOGENOM" id="CLU_004217_2_2_7"/>
<dbReference type="OrthoDB" id="9804305at2"/>
<dbReference type="Proteomes" id="UP000002714">
    <property type="component" value="Chromosome"/>
</dbReference>
<dbReference type="GO" id="GO:0005829">
    <property type="term" value="C:cytosol"/>
    <property type="evidence" value="ECO:0007669"/>
    <property type="project" value="TreeGrafter"/>
</dbReference>
<dbReference type="GO" id="GO:0000175">
    <property type="term" value="F:3'-5'-RNA exonuclease activity"/>
    <property type="evidence" value="ECO:0007669"/>
    <property type="project" value="TreeGrafter"/>
</dbReference>
<dbReference type="GO" id="GO:0000287">
    <property type="term" value="F:magnesium ion binding"/>
    <property type="evidence" value="ECO:0007669"/>
    <property type="project" value="UniProtKB-UniRule"/>
</dbReference>
<dbReference type="GO" id="GO:0004654">
    <property type="term" value="F:polyribonucleotide nucleotidyltransferase activity"/>
    <property type="evidence" value="ECO:0007669"/>
    <property type="project" value="UniProtKB-UniRule"/>
</dbReference>
<dbReference type="GO" id="GO:0003723">
    <property type="term" value="F:RNA binding"/>
    <property type="evidence" value="ECO:0007669"/>
    <property type="project" value="UniProtKB-UniRule"/>
</dbReference>
<dbReference type="GO" id="GO:0006402">
    <property type="term" value="P:mRNA catabolic process"/>
    <property type="evidence" value="ECO:0007669"/>
    <property type="project" value="UniProtKB-UniRule"/>
</dbReference>
<dbReference type="GO" id="GO:0006396">
    <property type="term" value="P:RNA processing"/>
    <property type="evidence" value="ECO:0007669"/>
    <property type="project" value="InterPro"/>
</dbReference>
<dbReference type="CDD" id="cd02393">
    <property type="entry name" value="KH-I_PNPase"/>
    <property type="match status" value="1"/>
</dbReference>
<dbReference type="CDD" id="cd11364">
    <property type="entry name" value="RNase_PH_PNPase_2"/>
    <property type="match status" value="1"/>
</dbReference>
<dbReference type="FunFam" id="3.30.1370.10:FF:000001">
    <property type="entry name" value="Polyribonucleotide nucleotidyltransferase"/>
    <property type="match status" value="1"/>
</dbReference>
<dbReference type="FunFam" id="3.30.230.70:FF:000026">
    <property type="entry name" value="Polyribonucleotide nucleotidyltransferase"/>
    <property type="match status" value="1"/>
</dbReference>
<dbReference type="FunFam" id="3.30.230.70:FF:000029">
    <property type="entry name" value="Polyribonucleotide nucleotidyltransferase"/>
    <property type="match status" value="1"/>
</dbReference>
<dbReference type="Gene3D" id="3.30.230.70">
    <property type="entry name" value="GHMP Kinase, N-terminal domain"/>
    <property type="match status" value="2"/>
</dbReference>
<dbReference type="Gene3D" id="3.30.1370.10">
    <property type="entry name" value="K Homology domain, type 1"/>
    <property type="match status" value="1"/>
</dbReference>
<dbReference type="Gene3D" id="2.40.50.140">
    <property type="entry name" value="Nucleic acid-binding proteins"/>
    <property type="match status" value="1"/>
</dbReference>
<dbReference type="HAMAP" id="MF_01595">
    <property type="entry name" value="PNPase"/>
    <property type="match status" value="1"/>
</dbReference>
<dbReference type="InterPro" id="IPR001247">
    <property type="entry name" value="ExoRNase_PH_dom1"/>
</dbReference>
<dbReference type="InterPro" id="IPR015847">
    <property type="entry name" value="ExoRNase_PH_dom2"/>
</dbReference>
<dbReference type="InterPro" id="IPR036345">
    <property type="entry name" value="ExoRNase_PH_dom2_sf"/>
</dbReference>
<dbReference type="InterPro" id="IPR004087">
    <property type="entry name" value="KH_dom"/>
</dbReference>
<dbReference type="InterPro" id="IPR004088">
    <property type="entry name" value="KH_dom_type_1"/>
</dbReference>
<dbReference type="InterPro" id="IPR036612">
    <property type="entry name" value="KH_dom_type_1_sf"/>
</dbReference>
<dbReference type="InterPro" id="IPR012340">
    <property type="entry name" value="NA-bd_OB-fold"/>
</dbReference>
<dbReference type="InterPro" id="IPR012162">
    <property type="entry name" value="PNPase"/>
</dbReference>
<dbReference type="InterPro" id="IPR027408">
    <property type="entry name" value="PNPase/RNase_PH_dom_sf"/>
</dbReference>
<dbReference type="InterPro" id="IPR015848">
    <property type="entry name" value="PNPase_PH_RNA-bd_bac/org-type"/>
</dbReference>
<dbReference type="InterPro" id="IPR036456">
    <property type="entry name" value="PNPase_PH_RNA-bd_sf"/>
</dbReference>
<dbReference type="InterPro" id="IPR020568">
    <property type="entry name" value="Ribosomal_Su5_D2-typ_SF"/>
</dbReference>
<dbReference type="InterPro" id="IPR003029">
    <property type="entry name" value="S1_domain"/>
</dbReference>
<dbReference type="NCBIfam" id="NF008805">
    <property type="entry name" value="PRK11824.1"/>
    <property type="match status" value="1"/>
</dbReference>
<dbReference type="PANTHER" id="PTHR11252">
    <property type="entry name" value="POLYRIBONUCLEOTIDE NUCLEOTIDYLTRANSFERASE"/>
    <property type="match status" value="1"/>
</dbReference>
<dbReference type="PANTHER" id="PTHR11252:SF0">
    <property type="entry name" value="POLYRIBONUCLEOTIDE NUCLEOTIDYLTRANSFERASE 1, MITOCHONDRIAL"/>
    <property type="match status" value="1"/>
</dbReference>
<dbReference type="Pfam" id="PF00013">
    <property type="entry name" value="KH_1"/>
    <property type="match status" value="1"/>
</dbReference>
<dbReference type="Pfam" id="PF03726">
    <property type="entry name" value="PNPase"/>
    <property type="match status" value="1"/>
</dbReference>
<dbReference type="Pfam" id="PF01138">
    <property type="entry name" value="RNase_PH"/>
    <property type="match status" value="2"/>
</dbReference>
<dbReference type="Pfam" id="PF03725">
    <property type="entry name" value="RNase_PH_C"/>
    <property type="match status" value="2"/>
</dbReference>
<dbReference type="Pfam" id="PF00575">
    <property type="entry name" value="S1"/>
    <property type="match status" value="1"/>
</dbReference>
<dbReference type="PIRSF" id="PIRSF005499">
    <property type="entry name" value="PNPase"/>
    <property type="match status" value="1"/>
</dbReference>
<dbReference type="SMART" id="SM00322">
    <property type="entry name" value="KH"/>
    <property type="match status" value="1"/>
</dbReference>
<dbReference type="SMART" id="SM00316">
    <property type="entry name" value="S1"/>
    <property type="match status" value="1"/>
</dbReference>
<dbReference type="SUPFAM" id="SSF54791">
    <property type="entry name" value="Eukaryotic type KH-domain (KH-domain type I)"/>
    <property type="match status" value="1"/>
</dbReference>
<dbReference type="SUPFAM" id="SSF50249">
    <property type="entry name" value="Nucleic acid-binding proteins"/>
    <property type="match status" value="1"/>
</dbReference>
<dbReference type="SUPFAM" id="SSF46915">
    <property type="entry name" value="Polynucleotide phosphorylase/guanosine pentaphosphate synthase (PNPase/GPSI), domain 3"/>
    <property type="match status" value="1"/>
</dbReference>
<dbReference type="SUPFAM" id="SSF55666">
    <property type="entry name" value="Ribonuclease PH domain 2-like"/>
    <property type="match status" value="2"/>
</dbReference>
<dbReference type="SUPFAM" id="SSF54211">
    <property type="entry name" value="Ribosomal protein S5 domain 2-like"/>
    <property type="match status" value="2"/>
</dbReference>
<dbReference type="PROSITE" id="PS50084">
    <property type="entry name" value="KH_TYPE_1"/>
    <property type="match status" value="1"/>
</dbReference>
<dbReference type="PROSITE" id="PS50126">
    <property type="entry name" value="S1"/>
    <property type="match status" value="1"/>
</dbReference>
<proteinExistence type="inferred from homology"/>
<organism>
    <name type="scientific">Sulfurimonas denitrificans (strain ATCC 33889 / DSM 1251)</name>
    <name type="common">Thiomicrospira denitrificans (strain ATCC 33889 / DSM 1251)</name>
    <dbReference type="NCBI Taxonomy" id="326298"/>
    <lineage>
        <taxon>Bacteria</taxon>
        <taxon>Pseudomonadati</taxon>
        <taxon>Campylobacterota</taxon>
        <taxon>Epsilonproteobacteria</taxon>
        <taxon>Campylobacterales</taxon>
        <taxon>Sulfurimonadaceae</taxon>
        <taxon>Sulfurimonas</taxon>
    </lineage>
</organism>
<keyword id="KW-0963">Cytoplasm</keyword>
<keyword id="KW-0460">Magnesium</keyword>
<keyword id="KW-0479">Metal-binding</keyword>
<keyword id="KW-0548">Nucleotidyltransferase</keyword>
<keyword id="KW-1185">Reference proteome</keyword>
<keyword id="KW-0694">RNA-binding</keyword>
<keyword id="KW-0808">Transferase</keyword>
<comment type="function">
    <text evidence="1">Involved in mRNA degradation. Catalyzes the phosphorolysis of single-stranded polyribonucleotides processively in the 3'- to 5'-direction.</text>
</comment>
<comment type="catalytic activity">
    <reaction evidence="1">
        <text>RNA(n+1) + phosphate = RNA(n) + a ribonucleoside 5'-diphosphate</text>
        <dbReference type="Rhea" id="RHEA:22096"/>
        <dbReference type="Rhea" id="RHEA-COMP:14527"/>
        <dbReference type="Rhea" id="RHEA-COMP:17342"/>
        <dbReference type="ChEBI" id="CHEBI:43474"/>
        <dbReference type="ChEBI" id="CHEBI:57930"/>
        <dbReference type="ChEBI" id="CHEBI:140395"/>
        <dbReference type="EC" id="2.7.7.8"/>
    </reaction>
</comment>
<comment type="cofactor">
    <cofactor evidence="1">
        <name>Mg(2+)</name>
        <dbReference type="ChEBI" id="CHEBI:18420"/>
    </cofactor>
</comment>
<comment type="subcellular location">
    <subcellularLocation>
        <location evidence="1">Cytoplasm</location>
    </subcellularLocation>
</comment>
<comment type="similarity">
    <text evidence="1">Belongs to the polyribonucleotide nucleotidyltransferase family.</text>
</comment>
<sequence>MKYDIKIDLKNKNEEYSFGEVAKQANGAAWLKSGNTVILATVVIDETEIVKDDFLPLTVQYIEKAYAAGKIPGGFFKRETKASDFETLTSRIVDRSLRPLFPKGFGHPTQITIMVFSVDKESDLQVLALNAASAALYVSDIDINKSVSAIRVAKIDGELILNPTLSELDKSTLDLYLSGTKEDLLMIEMRSKGGIKVDTNLMIDPLMDPTLSSAIIATHVSNAVPEDELITILAKAEELLFETNAMYEEMFKEFKKETSPLECKAHALNEEMLKYVRSNHYSDIKSAMNQMAKSERSTALRQLRKKIIITKEEWDEVELKDVIESVKKEQVRGQILNDRVRADGRALNEIRPISISTNVLPSAHASCLFTRGQTQALVVLTMGGPKDAQMFENLTDEGTQNENFMVHYNFPGFSVGEASPIMGTKRRELGHGNLAKRALEPIVNLEGQTVRLVSEILESNGSSSMATVCGGYMALRAADIETSDTIAGIAMGMVSEGDKYAILSDIMGLEDHDGDLDFKVTGSKDGITAMQMDIKLGGISLNILKEALYQAKEGRAHIINIMQEAEKNISFNDGVLPSTDFFHINPSFIGDIIGQAGKTIREIIEKFEVAIDIDKKDGKVKVTGKSKSGVQAAREHIEGIVSTPKMPKIEYKVGDIHKGIVKKIVEFGAFIELPDGVDGLLHISKISDQRVEKVSDILKEGEEINVEILEFKGNKISLGIA</sequence>
<gene>
    <name evidence="1" type="primary">pnp</name>
    <name type="ordered locus">Suden_0428</name>
</gene>
<protein>
    <recommendedName>
        <fullName evidence="1">Polyribonucleotide nucleotidyltransferase</fullName>
        <ecNumber evidence="1">2.7.7.8</ecNumber>
    </recommendedName>
    <alternativeName>
        <fullName evidence="1">Polynucleotide phosphorylase</fullName>
        <shortName evidence="1">PNPase</shortName>
    </alternativeName>
</protein>
<feature type="chain" id="PRO_0000329891" description="Polyribonucleotide nucleotidyltransferase">
    <location>
        <begin position="1"/>
        <end position="721"/>
    </location>
</feature>
<feature type="domain" description="KH" evidence="1">
    <location>
        <begin position="577"/>
        <end position="637"/>
    </location>
</feature>
<feature type="domain" description="S1 motif" evidence="1">
    <location>
        <begin position="654"/>
        <end position="721"/>
    </location>
</feature>
<feature type="binding site" evidence="1">
    <location>
        <position position="511"/>
    </location>
    <ligand>
        <name>Mg(2+)</name>
        <dbReference type="ChEBI" id="CHEBI:18420"/>
    </ligand>
</feature>
<feature type="binding site" evidence="1">
    <location>
        <position position="517"/>
    </location>
    <ligand>
        <name>Mg(2+)</name>
        <dbReference type="ChEBI" id="CHEBI:18420"/>
    </ligand>
</feature>
<evidence type="ECO:0000255" key="1">
    <source>
        <dbReference type="HAMAP-Rule" id="MF_01595"/>
    </source>
</evidence>
<reference key="1">
    <citation type="journal article" date="2008" name="Appl. Environ. Microbiol.">
        <title>Genome of the epsilonproteobacterial chemolithoautotroph Sulfurimonas denitrificans.</title>
        <authorList>
            <person name="Sievert S.M."/>
            <person name="Scott K.M."/>
            <person name="Klotz M.G."/>
            <person name="Chain P.S.G."/>
            <person name="Hauser L.J."/>
            <person name="Hemp J."/>
            <person name="Huegler M."/>
            <person name="Land M."/>
            <person name="Lapidus A."/>
            <person name="Larimer F.W."/>
            <person name="Lucas S."/>
            <person name="Malfatti S.A."/>
            <person name="Meyer F."/>
            <person name="Paulsen I.T."/>
            <person name="Ren Q."/>
            <person name="Simon J."/>
            <person name="Bailey K."/>
            <person name="Diaz E."/>
            <person name="Fitzpatrick K.A."/>
            <person name="Glover B."/>
            <person name="Gwatney N."/>
            <person name="Korajkic A."/>
            <person name="Long A."/>
            <person name="Mobberley J.M."/>
            <person name="Pantry S.N."/>
            <person name="Pazder G."/>
            <person name="Peterson S."/>
            <person name="Quintanilla J.D."/>
            <person name="Sprinkle R."/>
            <person name="Stephens J."/>
            <person name="Thomas P."/>
            <person name="Vaughn R."/>
            <person name="Weber M.J."/>
            <person name="Wooten L.L."/>
        </authorList>
    </citation>
    <scope>NUCLEOTIDE SEQUENCE [LARGE SCALE GENOMIC DNA]</scope>
    <source>
        <strain>ATCC 33889 / DSM 1251</strain>
    </source>
</reference>
<accession>Q30TH2</accession>
<name>PNP_SULDN</name>